<name>RRF_EXIS2</name>
<keyword id="KW-0963">Cytoplasm</keyword>
<keyword id="KW-0648">Protein biosynthesis</keyword>
<keyword id="KW-1185">Reference proteome</keyword>
<dbReference type="EMBL" id="CP001022">
    <property type="protein sequence ID" value="ACB61300.1"/>
    <property type="molecule type" value="Genomic_DNA"/>
</dbReference>
<dbReference type="RefSeq" id="WP_012370718.1">
    <property type="nucleotide sequence ID" value="NC_010556.1"/>
</dbReference>
<dbReference type="SMR" id="B1YI73"/>
<dbReference type="STRING" id="262543.Exig_1848"/>
<dbReference type="KEGG" id="esi:Exig_1848"/>
<dbReference type="eggNOG" id="COG0233">
    <property type="taxonomic scope" value="Bacteria"/>
</dbReference>
<dbReference type="HOGENOM" id="CLU_073981_2_0_9"/>
<dbReference type="OrthoDB" id="9804006at2"/>
<dbReference type="Proteomes" id="UP000001681">
    <property type="component" value="Chromosome"/>
</dbReference>
<dbReference type="GO" id="GO:0005737">
    <property type="term" value="C:cytoplasm"/>
    <property type="evidence" value="ECO:0007669"/>
    <property type="project" value="UniProtKB-SubCell"/>
</dbReference>
<dbReference type="GO" id="GO:0043023">
    <property type="term" value="F:ribosomal large subunit binding"/>
    <property type="evidence" value="ECO:0007669"/>
    <property type="project" value="TreeGrafter"/>
</dbReference>
<dbReference type="GO" id="GO:0006415">
    <property type="term" value="P:translational termination"/>
    <property type="evidence" value="ECO:0007669"/>
    <property type="project" value="UniProtKB-UniRule"/>
</dbReference>
<dbReference type="CDD" id="cd00520">
    <property type="entry name" value="RRF"/>
    <property type="match status" value="1"/>
</dbReference>
<dbReference type="FunFam" id="1.10.132.20:FF:000001">
    <property type="entry name" value="Ribosome-recycling factor"/>
    <property type="match status" value="1"/>
</dbReference>
<dbReference type="FunFam" id="3.30.1360.40:FF:000001">
    <property type="entry name" value="Ribosome-recycling factor"/>
    <property type="match status" value="1"/>
</dbReference>
<dbReference type="Gene3D" id="3.30.1360.40">
    <property type="match status" value="1"/>
</dbReference>
<dbReference type="Gene3D" id="1.10.132.20">
    <property type="entry name" value="Ribosome-recycling factor"/>
    <property type="match status" value="1"/>
</dbReference>
<dbReference type="HAMAP" id="MF_00040">
    <property type="entry name" value="RRF"/>
    <property type="match status" value="1"/>
</dbReference>
<dbReference type="InterPro" id="IPR002661">
    <property type="entry name" value="Ribosome_recyc_fac"/>
</dbReference>
<dbReference type="InterPro" id="IPR023584">
    <property type="entry name" value="Ribosome_recyc_fac_dom"/>
</dbReference>
<dbReference type="InterPro" id="IPR036191">
    <property type="entry name" value="RRF_sf"/>
</dbReference>
<dbReference type="NCBIfam" id="TIGR00496">
    <property type="entry name" value="frr"/>
    <property type="match status" value="1"/>
</dbReference>
<dbReference type="PANTHER" id="PTHR20982:SF3">
    <property type="entry name" value="MITOCHONDRIAL RIBOSOME RECYCLING FACTOR PSEUDO 1"/>
    <property type="match status" value="1"/>
</dbReference>
<dbReference type="PANTHER" id="PTHR20982">
    <property type="entry name" value="RIBOSOME RECYCLING FACTOR"/>
    <property type="match status" value="1"/>
</dbReference>
<dbReference type="Pfam" id="PF01765">
    <property type="entry name" value="RRF"/>
    <property type="match status" value="1"/>
</dbReference>
<dbReference type="SUPFAM" id="SSF55194">
    <property type="entry name" value="Ribosome recycling factor, RRF"/>
    <property type="match status" value="1"/>
</dbReference>
<gene>
    <name evidence="1" type="primary">frr</name>
    <name type="ordered locus">Exig_1848</name>
</gene>
<sequence length="185" mass="20901">MSQAIMKQAEERMEKAHLSLKKELATLRAGRANVSILDPVQVDYYGSPTPLNQVANVNTPEARLILITPWDKSMVTEIEKAIQRADLGLAPSSDGTVIRLAIPPLTEDRRKELVKLVKKYTEEGKVALRNIRRDTNEQLKKQEKDGVLTEDDLRGYTEDVQTLTDKFVKVLDQTAADKEQEIMEV</sequence>
<evidence type="ECO:0000255" key="1">
    <source>
        <dbReference type="HAMAP-Rule" id="MF_00040"/>
    </source>
</evidence>
<feature type="chain" id="PRO_1000090741" description="Ribosome-recycling factor">
    <location>
        <begin position="1"/>
        <end position="185"/>
    </location>
</feature>
<proteinExistence type="inferred from homology"/>
<comment type="function">
    <text evidence="1">Responsible for the release of ribosomes from messenger RNA at the termination of protein biosynthesis. May increase the efficiency of translation by recycling ribosomes from one round of translation to another.</text>
</comment>
<comment type="subcellular location">
    <subcellularLocation>
        <location evidence="1">Cytoplasm</location>
    </subcellularLocation>
</comment>
<comment type="similarity">
    <text evidence="1">Belongs to the RRF family.</text>
</comment>
<protein>
    <recommendedName>
        <fullName evidence="1">Ribosome-recycling factor</fullName>
        <shortName evidence="1">RRF</shortName>
    </recommendedName>
    <alternativeName>
        <fullName evidence="1">Ribosome-releasing factor</fullName>
    </alternativeName>
</protein>
<organism>
    <name type="scientific">Exiguobacterium sibiricum (strain DSM 17290 / CCUG 55495 / CIP 109462 / JCM 13490 / 255-15)</name>
    <dbReference type="NCBI Taxonomy" id="262543"/>
    <lineage>
        <taxon>Bacteria</taxon>
        <taxon>Bacillati</taxon>
        <taxon>Bacillota</taxon>
        <taxon>Bacilli</taxon>
        <taxon>Bacillales</taxon>
        <taxon>Bacillales Family XII. Incertae Sedis</taxon>
        <taxon>Exiguobacterium</taxon>
    </lineage>
</organism>
<reference key="1">
    <citation type="submission" date="2008-04" db="EMBL/GenBank/DDBJ databases">
        <title>Complete sequence of chromosome of Exiguobacterium sibiricum 255-15.</title>
        <authorList>
            <consortium name="US DOE Joint Genome Institute"/>
            <person name="Copeland A."/>
            <person name="Lucas S."/>
            <person name="Lapidus A."/>
            <person name="Glavina del Rio T."/>
            <person name="Dalin E."/>
            <person name="Tice H."/>
            <person name="Bruce D."/>
            <person name="Goodwin L."/>
            <person name="Pitluck S."/>
            <person name="Kiss H."/>
            <person name="Chertkov O."/>
            <person name="Monk C."/>
            <person name="Brettin T."/>
            <person name="Detter J.C."/>
            <person name="Han C."/>
            <person name="Kuske C.R."/>
            <person name="Schmutz J."/>
            <person name="Larimer F."/>
            <person name="Land M."/>
            <person name="Hauser L."/>
            <person name="Kyrpides N."/>
            <person name="Mikhailova N."/>
            <person name="Vishnivetskaya T."/>
            <person name="Rodrigues D.F."/>
            <person name="Gilichinsky D."/>
            <person name="Tiedje J."/>
            <person name="Richardson P."/>
        </authorList>
    </citation>
    <scope>NUCLEOTIDE SEQUENCE [LARGE SCALE GENOMIC DNA]</scope>
    <source>
        <strain>DSM 17290 / CCUG 55495 / CIP 109462 / JCM 13490 / 255-15</strain>
    </source>
</reference>
<accession>B1YI73</accession>